<name>SOL5_ALTSO</name>
<evidence type="ECO:0000250" key="1">
    <source>
        <dbReference type="UniProtKB" id="P08159"/>
    </source>
</evidence>
<evidence type="ECO:0000255" key="2"/>
<evidence type="ECO:0000255" key="3">
    <source>
        <dbReference type="PROSITE-ProRule" id="PRU00718"/>
    </source>
</evidence>
<evidence type="ECO:0000269" key="4">
    <source>
    </source>
</evidence>
<evidence type="ECO:0000269" key="5">
    <source>
    </source>
</evidence>
<evidence type="ECO:0000269" key="6">
    <source>
    </source>
</evidence>
<evidence type="ECO:0000303" key="7">
    <source>
    </source>
</evidence>
<evidence type="ECO:0000305" key="8"/>
<accession>D7UQ40</accession>
<keyword id="KW-0903">Direct protein sequencing</keyword>
<keyword id="KW-0274">FAD</keyword>
<keyword id="KW-0285">Flavoprotein</keyword>
<keyword id="KW-0325">Glycoprotein</keyword>
<keyword id="KW-0413">Isomerase</keyword>
<keyword id="KW-0560">Oxidoreductase</keyword>
<keyword id="KW-0732">Signal</keyword>
<keyword id="KW-0843">Virulence</keyword>
<protein>
    <recommendedName>
        <fullName evidence="7">Bifunctional solanapyrone synthase</fullName>
        <ecNumber evidence="4 5 6">1.1.3.42</ecNumber>
        <ecNumber evidence="4 5 6">5.5.1.20</ecNumber>
    </recommendedName>
    <alternativeName>
        <fullName evidence="8">FAD-dependent monooxygenase sol5</fullName>
    </alternativeName>
    <alternativeName>
        <fullName>Prosolanapyrone-II oxidase</fullName>
    </alternativeName>
    <alternativeName>
        <fullName>Prosolanapyrone-III cycloisomerase</fullName>
    </alternativeName>
    <alternativeName>
        <fullName evidence="7">Solanapyrone biosynthesis protein 5</fullName>
    </alternativeName>
</protein>
<comment type="function">
    <text evidence="4 5 6">Bifunctional solanapyrone synthase; part of the gene cluster that mediates the biosynthesis of the phytotoxin solanapyrone, a causal agent of early blight disease of potato and tomato (PubMed:20486243). The prosolanapyrone synthase sol1 is a polyketide synthase that produces the octaketide desmethylprosolanapyrone I via sequential condensations of 7 malonyl-CoA units with one acetyl-CoA unit, and one methylation step (PubMed:20486243). The octaketide backbone is further methylated by the sol2 O-methyltransferase to yield prosolanapyrone I (PubMed:20486243). Prosolanapyrone I is hydroxylated to prosolanapyrone II by the cytochrome P450 monooxygenase sol6 (PubMed:20486243). The solanapyrone synthase sol5 then catalyzes the oxidation of prosolanapyrone II and the subsequent Diels Alder cycloisomerization of the product prosolanapyrone III to solanapyrones A and D (PubMed:18256508, PubMed:9659400). Solanapyrones A and D are then converted into solanapyrones B and E, respectively, by the sol3 dehydrogenase (PubMed:20486243).</text>
</comment>
<comment type="catalytic activity">
    <reaction evidence="4 5 6">
        <text>prosolanapyrone II + O2 = prosolanapyrone III + H2O2</text>
        <dbReference type="Rhea" id="RHEA:31679"/>
        <dbReference type="ChEBI" id="CHEBI:15379"/>
        <dbReference type="ChEBI" id="CHEBI:16240"/>
        <dbReference type="ChEBI" id="CHEBI:38238"/>
        <dbReference type="ChEBI" id="CHEBI:63164"/>
        <dbReference type="EC" id="1.1.3.42"/>
    </reaction>
    <physiologicalReaction direction="left-to-right" evidence="4 5 6">
        <dbReference type="Rhea" id="RHEA:31680"/>
    </physiologicalReaction>
</comment>
<comment type="catalytic activity">
    <reaction evidence="4 5 6">
        <text>prosolanapyrone III = (-)-solanapyrone A</text>
        <dbReference type="Rhea" id="RHEA:31683"/>
        <dbReference type="ChEBI" id="CHEBI:38229"/>
        <dbReference type="ChEBI" id="CHEBI:63164"/>
        <dbReference type="EC" id="5.5.1.20"/>
    </reaction>
    <physiologicalReaction direction="left-to-right" evidence="4 5 6">
        <dbReference type="Rhea" id="RHEA:31684"/>
    </physiologicalReaction>
</comment>
<comment type="catalytic activity">
    <reaction evidence="4 5 6">
        <text>prosolanapyrone III = solanapyrone D</text>
        <dbReference type="Rhea" id="RHEA:75143"/>
        <dbReference type="ChEBI" id="CHEBI:38240"/>
        <dbReference type="ChEBI" id="CHEBI:63164"/>
    </reaction>
    <physiologicalReaction direction="left-to-right" evidence="4 5 6">
        <dbReference type="Rhea" id="RHEA:75144"/>
    </physiologicalReaction>
</comment>
<comment type="cofactor">
    <cofactor evidence="8">
        <name>FAD</name>
        <dbReference type="ChEBI" id="CHEBI:57692"/>
    </cofactor>
</comment>
<comment type="biophysicochemical properties">
    <kinetics>
        <KM evidence="6">16 uM for Prosolanapyrone II</KM>
    </kinetics>
</comment>
<comment type="pathway">
    <text evidence="4 5 6">Phytotoxin biosynthesis.</text>
</comment>
<comment type="similarity">
    <text evidence="8">Belongs to the oxygen-dependent FAD-linked oxidoreductase family.</text>
</comment>
<dbReference type="EC" id="1.1.3.42" evidence="4 5 6"/>
<dbReference type="EC" id="5.5.1.20" evidence="4 5 6"/>
<dbReference type="EMBL" id="AB514562">
    <property type="protein sequence ID" value="BAJ09785.1"/>
    <property type="molecule type" value="Genomic_DNA"/>
</dbReference>
<dbReference type="SMR" id="D7UQ40"/>
<dbReference type="GlyCosmos" id="D7UQ40">
    <property type="glycosylation" value="3 sites, No reported glycans"/>
</dbReference>
<dbReference type="KEGG" id="ag:BAJ09785"/>
<dbReference type="BRENDA" id="1.1.3.42">
    <property type="organism ID" value="269"/>
</dbReference>
<dbReference type="BRENDA" id="5.5.1.20">
    <property type="organism ID" value="269"/>
</dbReference>
<dbReference type="SABIO-RK" id="D7UQ40"/>
<dbReference type="PHI-base" id="PHI:3347"/>
<dbReference type="GO" id="GO:0071949">
    <property type="term" value="F:FAD binding"/>
    <property type="evidence" value="ECO:0007669"/>
    <property type="project" value="InterPro"/>
</dbReference>
<dbReference type="GO" id="GO:0016853">
    <property type="term" value="F:isomerase activity"/>
    <property type="evidence" value="ECO:0007669"/>
    <property type="project" value="UniProtKB-KW"/>
</dbReference>
<dbReference type="GO" id="GO:0016491">
    <property type="term" value="F:oxidoreductase activity"/>
    <property type="evidence" value="ECO:0007669"/>
    <property type="project" value="UniProtKB-KW"/>
</dbReference>
<dbReference type="Gene3D" id="3.30.465.10">
    <property type="match status" value="1"/>
</dbReference>
<dbReference type="InterPro" id="IPR016166">
    <property type="entry name" value="FAD-bd_PCMH"/>
</dbReference>
<dbReference type="InterPro" id="IPR036318">
    <property type="entry name" value="FAD-bd_PCMH-like_sf"/>
</dbReference>
<dbReference type="InterPro" id="IPR016169">
    <property type="entry name" value="FAD-bd_PCMH_sub2"/>
</dbReference>
<dbReference type="InterPro" id="IPR050416">
    <property type="entry name" value="FAD-linked_Oxidoreductase"/>
</dbReference>
<dbReference type="InterPro" id="IPR006094">
    <property type="entry name" value="Oxid_FAD_bind_N"/>
</dbReference>
<dbReference type="PANTHER" id="PTHR42973">
    <property type="entry name" value="BINDING OXIDOREDUCTASE, PUTATIVE (AFU_ORTHOLOGUE AFUA_1G17690)-RELATED"/>
    <property type="match status" value="1"/>
</dbReference>
<dbReference type="PANTHER" id="PTHR42973:SF13">
    <property type="entry name" value="FAD-BINDING PCMH-TYPE DOMAIN-CONTAINING PROTEIN"/>
    <property type="match status" value="1"/>
</dbReference>
<dbReference type="Pfam" id="PF01565">
    <property type="entry name" value="FAD_binding_4"/>
    <property type="match status" value="1"/>
</dbReference>
<dbReference type="SUPFAM" id="SSF56176">
    <property type="entry name" value="FAD-binding/transporter-associated domain-like"/>
    <property type="match status" value="1"/>
</dbReference>
<dbReference type="PROSITE" id="PS51387">
    <property type="entry name" value="FAD_PCMH"/>
    <property type="match status" value="1"/>
</dbReference>
<proteinExistence type="evidence at protein level"/>
<sequence length="515" mass="55994">MRLIILNLLSLGITPSVVGHSGPHRQETQNLNNFLESNAINPAAINGETRHTGGVHLACAILEASNQTAVVFPSDGELYTQIDKAHASATAPKNPACIYTPNDVKGVSLGVKVATFVQAKFAIRSGGHSPMEYFANIDGGVLISLAGIKTLEYNADTQTQRSGFGNLWQDVYRHVNAQGRTVVGGRTGSVGLALTLGGGLSHFSNAYGWAAQNVLSYEMVLADGSIVIASEEENSDLYFAVKAGANNFGIVTHIVQRTYPLGKIWGGSMIFPGNASAQFMAALADYQAKGQLDKKSAILPYVGLIADAVVAQFSYLEPVERPEAFEAFYDIPVIQDLTQVWDTFAAMVTAPIPYNMTRFSYATTDLLYDKEAYLEIERICHKYIPRMRKLEGGDIMLMPQPISVSMVGEARARGSDPMGVADQPQLWFVVSSGWNLAQDDAEAESIMLDALAEVEEYTKSRALHLPFYFLNDAFSTQMPLQSYGAVTYGKLQAASRKYDPTRVFQELVPGGFKLV</sequence>
<reference key="1">
    <citation type="journal article" date="2010" name="ChemBioChem">
        <title>Solanapyrone synthase, a possible Diels-Alderase and iterative type I polyketide synthase encoded in a biosynthetic gene cluster from Alternaria solani.</title>
        <authorList>
            <person name="Kasahara K."/>
            <person name="Miyamoto T."/>
            <person name="Fujimoto T."/>
            <person name="Oguri H."/>
            <person name="Tokiwano T."/>
            <person name="Oikawa H."/>
            <person name="Ebizuka Y."/>
            <person name="Fujii I."/>
        </authorList>
    </citation>
    <scope>NUCLEOTIDE SEQUENCE [GENOMIC DNA]</scope>
    <scope>FUNCTION</scope>
    <scope>CATALYTIC ACTIVITY</scope>
</reference>
<reference key="2">
    <citation type="journal article" date="2008" name="Biosci. Biotechnol. Biochem.">
        <title>Purification and N-terminal amino acid sequence of solanapyrone synthase, a natural Diels-Alderase from Alternaria solani.</title>
        <authorList>
            <person name="Katayama K."/>
            <person name="Kobayashi T."/>
            <person name="Chijimatsu M."/>
            <person name="Ichihara A."/>
            <person name="Oikawa H."/>
        </authorList>
    </citation>
    <scope>PROTEIN SEQUENCE OF 26-42</scope>
    <scope>FUNCTION</scope>
    <scope>CATALYTIC ACTIVITY</scope>
</reference>
<reference key="3">
    <citation type="journal article" date="1998" name="Biochim. Biophys. Acta">
        <title>Enzymatic activity and partial purification of solanapyrone synthase: first enzyme catalyzing Diels-Alder reaction.</title>
        <authorList>
            <person name="Katayama K."/>
            <person name="Kobayashi T."/>
            <person name="Oikawa H."/>
            <person name="Honma M."/>
            <person name="Ichihara A."/>
        </authorList>
    </citation>
    <scope>CATALYTIC ACTIVITY</scope>
    <scope>FUNCTION</scope>
    <scope>BIOPHYSICOCHEMICAL PROPERTIES</scope>
</reference>
<gene>
    <name type="primary">sol5</name>
</gene>
<feature type="signal peptide" evidence="4">
    <location>
        <begin position="1"/>
        <end position="25"/>
    </location>
</feature>
<feature type="chain" id="PRO_0000416192" description="Bifunctional solanapyrone synthase">
    <location>
        <begin position="26"/>
        <end position="515"/>
    </location>
</feature>
<feature type="domain" description="FAD-binding PCMH-type" evidence="3">
    <location>
        <begin position="91"/>
        <end position="261"/>
    </location>
</feature>
<feature type="modified residue" description="Pros-8alpha-FAD histidine" evidence="1">
    <location>
        <position position="128"/>
    </location>
</feature>
<feature type="glycosylation site" description="N-linked (GlcNAc...) asparagine" evidence="2">
    <location>
        <position position="66"/>
    </location>
</feature>
<feature type="glycosylation site" description="N-linked (GlcNAc...) asparagine" evidence="2">
    <location>
        <position position="274"/>
    </location>
</feature>
<feature type="glycosylation site" description="N-linked (GlcNAc...) asparagine" evidence="2">
    <location>
        <position position="355"/>
    </location>
</feature>
<organism>
    <name type="scientific">Alternaria solani</name>
    <dbReference type="NCBI Taxonomy" id="48100"/>
    <lineage>
        <taxon>Eukaryota</taxon>
        <taxon>Fungi</taxon>
        <taxon>Dikarya</taxon>
        <taxon>Ascomycota</taxon>
        <taxon>Pezizomycotina</taxon>
        <taxon>Dothideomycetes</taxon>
        <taxon>Pleosporomycetidae</taxon>
        <taxon>Pleosporales</taxon>
        <taxon>Pleosporineae</taxon>
        <taxon>Pleosporaceae</taxon>
        <taxon>Alternaria</taxon>
        <taxon>Alternaria sect. Porri</taxon>
    </lineage>
</organism>